<comment type="interaction">
    <interactant intactId="EBI-2414102">
        <id>P34344</id>
    </interactant>
    <interactant intactId="EBI-2414107">
        <id>Q9XUJ2</id>
        <label>CELE_W09D6.5</label>
    </interactant>
    <organismsDiffer>false</organismsDiffer>
    <experiments>4</experiments>
</comment>
<comment type="alternative products">
    <event type="alternative splicing"/>
    <isoform>
        <id>P34344-1</id>
        <name>a</name>
        <sequence type="displayed"/>
    </isoform>
    <isoform>
        <id>P34344-2</id>
        <name>b</name>
        <sequence type="described" ref="VSP_015953 VSP_015954"/>
    </isoform>
</comment>
<comment type="sequence caution" evidence="1">
    <conflict type="erroneous gene model prediction">
        <sequence resource="EMBL-CDS" id="CCD66014"/>
    </conflict>
</comment>
<comment type="sequence caution" evidence="1">
    <conflict type="erroneous gene model prediction">
        <sequence resource="EMBL-CDS" id="CCD66015"/>
    </conflict>
</comment>
<evidence type="ECO:0000305" key="1"/>
<proteinExistence type="evidence at protein level"/>
<gene>
    <name type="primary">tag-250</name>
    <name type="ORF">C29E4.5</name>
</gene>
<keyword id="KW-0025">Alternative splicing</keyword>
<keyword id="KW-1185">Reference proteome</keyword>
<keyword id="KW-0677">Repeat</keyword>
<sequence length="610" mass="67333">MSAVNGLVPSTIFDRINSDMDVSEEMEEIREVLYEMIKTNFPMGVAATHLSEKYHEEFVSKGLGRELPEDWIQQVTAAEEFEAQTRGPITILFVRLSNTSSFKRPPINSVNVRVISTDREPTADELKKIKQRKENEPTEHAKTLSQQSVALKEGSTVSIVYADSPKRFFIRALADDDQYEKIGTTLAEIYAQETPPSALDSRVAIYEIVAGGAYALQDSNGTWFRVIAKQPPQSGQVMCHFVDVGVCEKFPVAAIRLLPPAVHPVMSIGSMAREVRMDVSEEESLRLNNKFVDLTFETKDDGIQVPINLTLSKFDSSDSESLPVVDLQSSDGLSITEFLKKPSGVVRLSTPTKTTSPITPASASTSSLTCLFDKPATIQPMTVAQMPMSAFPANAIFAAGPTDISLRQLSLDPMPDYMYAKLKDECALPDSQLESSPDFGGFYAAFIDDRWERVQCIRASKIDKQAYCVYLLDVGAFQYVRKEAMRRLNSTSPFKKMLMFKCKIGGIKPVAGGEVWSRESHEAVREFFEAACGEPVVVEPTQPGWSQWKQLNAPAVPTCEARLSCCGRDIGDWLIACGLALPINAPIPSPNSQSLLTFVPTPINIVGRNI</sequence>
<dbReference type="EMBL" id="FO080706">
    <property type="protein sequence ID" value="CCD66014.1"/>
    <property type="status" value="ALT_SEQ"/>
    <property type="molecule type" value="Genomic_DNA"/>
</dbReference>
<dbReference type="EMBL" id="FO080706">
    <property type="protein sequence ID" value="CCD66015.1"/>
    <property type="status" value="ALT_SEQ"/>
    <property type="molecule type" value="Genomic_DNA"/>
</dbReference>
<dbReference type="PIR" id="S44773">
    <property type="entry name" value="S44773"/>
</dbReference>
<dbReference type="RefSeq" id="NP_001021188.2">
    <property type="nucleotide sequence ID" value="NM_001026017.3"/>
</dbReference>
<dbReference type="RefSeq" id="NP_001021189.2">
    <property type="nucleotide sequence ID" value="NM_001026018.2"/>
</dbReference>
<dbReference type="BioGRID" id="41320">
    <property type="interactions" value="2"/>
</dbReference>
<dbReference type="FunCoup" id="P34344">
    <property type="interactions" value="129"/>
</dbReference>
<dbReference type="IntAct" id="P34344">
    <property type="interactions" value="2"/>
</dbReference>
<dbReference type="STRING" id="6239.C29E4.5a.1"/>
<dbReference type="PaxDb" id="6239-C29E4.5a"/>
<dbReference type="PeptideAtlas" id="P34344"/>
<dbReference type="EnsemblMetazoa" id="C29E4.5a.1">
    <property type="protein sequence ID" value="C29E4.5a.1"/>
    <property type="gene ID" value="WBGene00016203"/>
</dbReference>
<dbReference type="EnsemblMetazoa" id="C29E4.5b.1">
    <property type="protein sequence ID" value="C29E4.5b.1"/>
    <property type="gene ID" value="WBGene00016203"/>
</dbReference>
<dbReference type="EnsemblMetazoa" id="C29E4.5b.2">
    <property type="protein sequence ID" value="C29E4.5b.2"/>
    <property type="gene ID" value="WBGene00016203"/>
</dbReference>
<dbReference type="GeneID" id="176113"/>
<dbReference type="KEGG" id="cel:CELE_C29E4.5"/>
<dbReference type="UCSC" id="C29E4.5a">
    <molecule id="P34344-1"/>
    <property type="organism name" value="c. elegans"/>
</dbReference>
<dbReference type="AGR" id="WB:WBGene00016203"/>
<dbReference type="CTD" id="176113"/>
<dbReference type="WormBase" id="C29E4.5a">
    <property type="protein sequence ID" value="CE43801"/>
    <property type="gene ID" value="WBGene00016203"/>
    <property type="gene designation" value="tag-250"/>
</dbReference>
<dbReference type="WormBase" id="C29E4.5b">
    <property type="protein sequence ID" value="CE43781"/>
    <property type="gene ID" value="WBGene00016203"/>
    <property type="gene designation" value="tag-250"/>
</dbReference>
<dbReference type="eggNOG" id="ENOG502S9EE">
    <property type="taxonomic scope" value="Eukaryota"/>
</dbReference>
<dbReference type="HOGENOM" id="CLU_478355_0_0_1"/>
<dbReference type="InParanoid" id="P34344"/>
<dbReference type="OrthoDB" id="5805117at2759"/>
<dbReference type="PRO" id="PR:P34344"/>
<dbReference type="Proteomes" id="UP000001940">
    <property type="component" value="Chromosome III"/>
</dbReference>
<dbReference type="Bgee" id="WBGene00016203">
    <property type="expression patterns" value="Expressed in pharyngeal muscle cell (C elegans) and 4 other cell types or tissues"/>
</dbReference>
<dbReference type="GO" id="GO:0043186">
    <property type="term" value="C:P granule"/>
    <property type="evidence" value="ECO:0000318"/>
    <property type="project" value="GO_Central"/>
</dbReference>
<dbReference type="GO" id="GO:0030719">
    <property type="term" value="P:P granule organization"/>
    <property type="evidence" value="ECO:0000318"/>
    <property type="project" value="GO_Central"/>
</dbReference>
<dbReference type="GO" id="GO:0034587">
    <property type="term" value="P:piRNA processing"/>
    <property type="evidence" value="ECO:0000318"/>
    <property type="project" value="GO_Central"/>
</dbReference>
<dbReference type="GO" id="GO:0007283">
    <property type="term" value="P:spermatogenesis"/>
    <property type="evidence" value="ECO:0000318"/>
    <property type="project" value="GO_Central"/>
</dbReference>
<dbReference type="CDD" id="cd20379">
    <property type="entry name" value="Tudor_dTUD-like"/>
    <property type="match status" value="2"/>
</dbReference>
<dbReference type="Gene3D" id="2.30.30.140">
    <property type="match status" value="1"/>
</dbReference>
<dbReference type="Gene3D" id="2.40.50.90">
    <property type="match status" value="1"/>
</dbReference>
<dbReference type="InterPro" id="IPR035437">
    <property type="entry name" value="SNase_OB-fold_sf"/>
</dbReference>
<dbReference type="InterPro" id="IPR002999">
    <property type="entry name" value="Tudor"/>
</dbReference>
<dbReference type="InterPro" id="IPR050621">
    <property type="entry name" value="Tudor_domain_containing"/>
</dbReference>
<dbReference type="PANTHER" id="PTHR22948:SF77">
    <property type="entry name" value="SERINE_THREONINE-PROTEIN KINASE 31-LIKE ISOFORM X1"/>
    <property type="match status" value="1"/>
</dbReference>
<dbReference type="PANTHER" id="PTHR22948">
    <property type="entry name" value="TUDOR DOMAIN CONTAINING PROTEIN"/>
    <property type="match status" value="1"/>
</dbReference>
<dbReference type="Pfam" id="PF00567">
    <property type="entry name" value="TUDOR"/>
    <property type="match status" value="2"/>
</dbReference>
<dbReference type="SMART" id="SM00333">
    <property type="entry name" value="TUDOR"/>
    <property type="match status" value="2"/>
</dbReference>
<dbReference type="SUPFAM" id="SSF63748">
    <property type="entry name" value="Tudor/PWWP/MBT"/>
    <property type="match status" value="2"/>
</dbReference>
<name>TG250_CAEEL</name>
<reference key="1">
    <citation type="journal article" date="1994" name="Nature">
        <title>2.2 Mb of contiguous nucleotide sequence from chromosome III of C. elegans.</title>
        <authorList>
            <person name="Wilson R."/>
            <person name="Ainscough R."/>
            <person name="Anderson K."/>
            <person name="Baynes C."/>
            <person name="Berks M."/>
            <person name="Bonfield J."/>
            <person name="Burton J."/>
            <person name="Connell M."/>
            <person name="Copsey T."/>
            <person name="Cooper J."/>
            <person name="Coulson A."/>
            <person name="Craxton M."/>
            <person name="Dear S."/>
            <person name="Du Z."/>
            <person name="Durbin R."/>
            <person name="Favello A."/>
            <person name="Fraser A."/>
            <person name="Fulton L."/>
            <person name="Gardner A."/>
            <person name="Green P."/>
            <person name="Hawkins T."/>
            <person name="Hillier L."/>
            <person name="Jier M."/>
            <person name="Johnston L."/>
            <person name="Jones M."/>
            <person name="Kershaw J."/>
            <person name="Kirsten J."/>
            <person name="Laisster N."/>
            <person name="Latreille P."/>
            <person name="Lightning J."/>
            <person name="Lloyd C."/>
            <person name="Mortimore B."/>
            <person name="O'Callaghan M."/>
            <person name="Parsons J."/>
            <person name="Percy C."/>
            <person name="Rifken L."/>
            <person name="Roopra A."/>
            <person name="Saunders D."/>
            <person name="Shownkeen R."/>
            <person name="Sims M."/>
            <person name="Smaldon N."/>
            <person name="Smith A."/>
            <person name="Smith M."/>
            <person name="Sonnhammer E."/>
            <person name="Staden R."/>
            <person name="Sulston J."/>
            <person name="Thierry-Mieg J."/>
            <person name="Thomas K."/>
            <person name="Vaudin M."/>
            <person name="Vaughan K."/>
            <person name="Waterston R."/>
            <person name="Watson A."/>
            <person name="Weinstock L."/>
            <person name="Wilkinson-Sproat J."/>
            <person name="Wohldman P."/>
        </authorList>
    </citation>
    <scope>NUCLEOTIDE SEQUENCE [LARGE SCALE GENOMIC DNA]</scope>
    <source>
        <strain>Bristol N2</strain>
    </source>
</reference>
<reference key="2">
    <citation type="journal article" date="1998" name="Science">
        <title>Genome sequence of the nematode C. elegans: a platform for investigating biology.</title>
        <authorList>
            <consortium name="The C. elegans sequencing consortium"/>
        </authorList>
    </citation>
    <scope>NUCLEOTIDE SEQUENCE [LARGE SCALE GENOMIC DNA]</scope>
    <scope>ALTERNATIVE SPLICING</scope>
    <source>
        <strain>Bristol N2</strain>
    </source>
</reference>
<organism>
    <name type="scientific">Caenorhabditis elegans</name>
    <dbReference type="NCBI Taxonomy" id="6239"/>
    <lineage>
        <taxon>Eukaryota</taxon>
        <taxon>Metazoa</taxon>
        <taxon>Ecdysozoa</taxon>
        <taxon>Nematoda</taxon>
        <taxon>Chromadorea</taxon>
        <taxon>Rhabditida</taxon>
        <taxon>Rhabditina</taxon>
        <taxon>Rhabditomorpha</taxon>
        <taxon>Rhabditoidea</taxon>
        <taxon>Rhabditidae</taxon>
        <taxon>Peloderinae</taxon>
        <taxon>Caenorhabditis</taxon>
    </lineage>
</organism>
<accession>P34344</accession>
<accession>C8JQN7</accession>
<accession>Q4TTD4</accession>
<feature type="chain" id="PRO_0000183184" description="Putative protein tag-250">
    <location>
        <begin position="1"/>
        <end position="610"/>
    </location>
</feature>
<feature type="domain" description="Tudor 1">
    <location>
        <begin position="149"/>
        <end position="260"/>
    </location>
</feature>
<feature type="domain" description="Tudor 2">
    <location>
        <begin position="386"/>
        <end position="506"/>
    </location>
</feature>
<feature type="splice variant" id="VSP_015953" description="In isoform b." evidence="1">
    <original>VISTDREPTADELKKIKQRKENE</original>
    <variation>ACPIRINTTPPLSSLTLIRIWRN</variation>
    <location>
        <begin position="114"/>
        <end position="136"/>
    </location>
</feature>
<feature type="splice variant" id="VSP_015954" description="In isoform b." evidence="1">
    <location>
        <begin position="137"/>
        <end position="610"/>
    </location>
</feature>
<protein>
    <recommendedName>
        <fullName>Putative protein tag-250</fullName>
    </recommendedName>
</protein>